<reference key="1">
    <citation type="submission" date="2005-08" db="EMBL/GenBank/DDBJ databases">
        <authorList>
            <consortium name="NIH - Mammalian Gene Collection (MGC) project"/>
        </authorList>
    </citation>
    <scope>NUCLEOTIDE SEQUENCE [LARGE SCALE MRNA]</scope>
    <source>
        <strain>Crossbred X Angus</strain>
        <tissue>Ileum</tissue>
    </source>
</reference>
<gene>
    <name type="primary">TSPAN1</name>
</gene>
<keyword id="KW-0325">Glycoprotein</keyword>
<keyword id="KW-0458">Lysosome</keyword>
<keyword id="KW-0472">Membrane</keyword>
<keyword id="KW-1185">Reference proteome</keyword>
<keyword id="KW-0812">Transmembrane</keyword>
<keyword id="KW-1133">Transmembrane helix</keyword>
<proteinExistence type="evidence at transcript level"/>
<protein>
    <recommendedName>
        <fullName>Tetraspanin-1</fullName>
        <shortName>Tspan-1</shortName>
    </recommendedName>
</protein>
<evidence type="ECO:0000250" key="1"/>
<evidence type="ECO:0000250" key="2">
    <source>
        <dbReference type="UniProtKB" id="O60635"/>
    </source>
</evidence>
<evidence type="ECO:0000250" key="3">
    <source>
        <dbReference type="UniProtKB" id="Q6AYR9"/>
    </source>
</evidence>
<evidence type="ECO:0000255" key="4"/>
<evidence type="ECO:0000305" key="5"/>
<feature type="chain" id="PRO_0000247132" description="Tetraspanin-1">
    <location>
        <begin position="1"/>
        <end position="241"/>
    </location>
</feature>
<feature type="topological domain" description="Cytoplasmic" evidence="4">
    <location>
        <begin position="1"/>
        <end position="11"/>
    </location>
</feature>
<feature type="transmembrane region" description="Helical" evidence="4">
    <location>
        <begin position="12"/>
        <end position="32"/>
    </location>
</feature>
<feature type="topological domain" description="Extracellular" evidence="4">
    <location>
        <begin position="33"/>
        <end position="52"/>
    </location>
</feature>
<feature type="transmembrane region" description="Helical" evidence="4">
    <location>
        <begin position="53"/>
        <end position="73"/>
    </location>
</feature>
<feature type="topological domain" description="Cytoplasmic" evidence="4">
    <location>
        <begin position="74"/>
        <end position="88"/>
    </location>
</feature>
<feature type="transmembrane region" description="Helical" evidence="4">
    <location>
        <begin position="89"/>
        <end position="109"/>
    </location>
</feature>
<feature type="topological domain" description="Extracellular" evidence="4">
    <location>
        <begin position="110"/>
        <end position="211"/>
    </location>
</feature>
<feature type="transmembrane region" description="Helical" evidence="4">
    <location>
        <begin position="212"/>
        <end position="232"/>
    </location>
</feature>
<feature type="topological domain" description="Cytoplasmic" evidence="4">
    <location>
        <begin position="233"/>
        <end position="241"/>
    </location>
</feature>
<feature type="glycosylation site" description="N-linked (GlcNAc...) asparagine" evidence="4">
    <location>
        <position position="141"/>
    </location>
</feature>
<feature type="glycosylation site" description="N-linked (GlcNAc...) asparagine" evidence="4">
    <location>
        <position position="154"/>
    </location>
</feature>
<feature type="glycosylation site" description="N-linked (GlcNAc...) asparagine" evidence="4">
    <location>
        <position position="167"/>
    </location>
</feature>
<feature type="glycosylation site" description="N-linked (GlcNAc...) asparagine" evidence="4">
    <location>
        <position position="180"/>
    </location>
</feature>
<feature type="glycosylation site" description="N-linked (GlcNAc...) asparagine" evidence="4">
    <location>
        <position position="189"/>
    </location>
</feature>
<feature type="glycosylation site" description="N-linked (GlcNAc...) asparagine" evidence="4">
    <location>
        <position position="194"/>
    </location>
</feature>
<dbReference type="EMBL" id="BC102280">
    <property type="protein sequence ID" value="AAI02281.1"/>
    <property type="molecule type" value="mRNA"/>
</dbReference>
<dbReference type="RefSeq" id="NP_001029442.1">
    <property type="nucleotide sequence ID" value="NM_001034270.1"/>
</dbReference>
<dbReference type="SMR" id="Q3T0S3"/>
<dbReference type="FunCoup" id="Q3T0S3">
    <property type="interactions" value="7"/>
</dbReference>
<dbReference type="STRING" id="9913.ENSBTAP00000017715"/>
<dbReference type="GlyCosmos" id="Q3T0S3">
    <property type="glycosylation" value="6 sites, No reported glycans"/>
</dbReference>
<dbReference type="GlyGen" id="Q3T0S3">
    <property type="glycosylation" value="6 sites"/>
</dbReference>
<dbReference type="PaxDb" id="9913-ENSBTAP00000017715"/>
<dbReference type="Ensembl" id="ENSBTAT00000017715.4">
    <property type="protein sequence ID" value="ENSBTAP00000017715.2"/>
    <property type="gene ID" value="ENSBTAG00000013320.4"/>
</dbReference>
<dbReference type="GeneID" id="506550"/>
<dbReference type="KEGG" id="bta:506550"/>
<dbReference type="CTD" id="10103"/>
<dbReference type="VEuPathDB" id="HostDB:ENSBTAG00000013320"/>
<dbReference type="VGNC" id="VGNC:36425">
    <property type="gene designation" value="TSPAN1"/>
</dbReference>
<dbReference type="eggNOG" id="KOG3882">
    <property type="taxonomic scope" value="Eukaryota"/>
</dbReference>
<dbReference type="GeneTree" id="ENSGT00940000158851"/>
<dbReference type="HOGENOM" id="CLU_055524_4_1_1"/>
<dbReference type="InParanoid" id="Q3T0S3"/>
<dbReference type="OMA" id="CYGAHTE"/>
<dbReference type="OrthoDB" id="6134317at2759"/>
<dbReference type="TreeFam" id="TF352892"/>
<dbReference type="Proteomes" id="UP000009136">
    <property type="component" value="Chromosome 3"/>
</dbReference>
<dbReference type="Bgee" id="ENSBTAG00000013320">
    <property type="expression patterns" value="Expressed in abomasum and 78 other cell types or tissues"/>
</dbReference>
<dbReference type="GO" id="GO:0030054">
    <property type="term" value="C:cell junction"/>
    <property type="evidence" value="ECO:0007669"/>
    <property type="project" value="Ensembl"/>
</dbReference>
<dbReference type="GO" id="GO:0005765">
    <property type="term" value="C:lysosomal membrane"/>
    <property type="evidence" value="ECO:0007669"/>
    <property type="project" value="UniProtKB-SubCell"/>
</dbReference>
<dbReference type="GO" id="GO:0005654">
    <property type="term" value="C:nucleoplasm"/>
    <property type="evidence" value="ECO:0007669"/>
    <property type="project" value="Ensembl"/>
</dbReference>
<dbReference type="GO" id="GO:0048471">
    <property type="term" value="C:perinuclear region of cytoplasm"/>
    <property type="evidence" value="ECO:0007669"/>
    <property type="project" value="Ensembl"/>
</dbReference>
<dbReference type="GO" id="GO:0005886">
    <property type="term" value="C:plasma membrane"/>
    <property type="evidence" value="ECO:0000318"/>
    <property type="project" value="GO_Central"/>
</dbReference>
<dbReference type="GO" id="GO:0031982">
    <property type="term" value="C:vesicle"/>
    <property type="evidence" value="ECO:0007669"/>
    <property type="project" value="Ensembl"/>
</dbReference>
<dbReference type="GO" id="GO:0050821">
    <property type="term" value="P:protein stabilization"/>
    <property type="evidence" value="ECO:0007669"/>
    <property type="project" value="Ensembl"/>
</dbReference>
<dbReference type="CDD" id="cd03156">
    <property type="entry name" value="uroplakin_I_like_LEL"/>
    <property type="match status" value="1"/>
</dbReference>
<dbReference type="FunFam" id="1.10.1450.10:FF:000020">
    <property type="entry name" value="Tetraspanin"/>
    <property type="match status" value="1"/>
</dbReference>
<dbReference type="Gene3D" id="1.10.1450.10">
    <property type="entry name" value="Tetraspanin"/>
    <property type="match status" value="1"/>
</dbReference>
<dbReference type="InterPro" id="IPR018499">
    <property type="entry name" value="Tetraspanin/Peripherin"/>
</dbReference>
<dbReference type="InterPro" id="IPR000301">
    <property type="entry name" value="Tetraspanin_animals"/>
</dbReference>
<dbReference type="InterPro" id="IPR018503">
    <property type="entry name" value="Tetraspanin_CS"/>
</dbReference>
<dbReference type="InterPro" id="IPR008952">
    <property type="entry name" value="Tetraspanin_EC2_sf"/>
</dbReference>
<dbReference type="PANTHER" id="PTHR19282">
    <property type="entry name" value="TETRASPANIN"/>
    <property type="match status" value="1"/>
</dbReference>
<dbReference type="PANTHER" id="PTHR19282:SF216">
    <property type="entry name" value="TETRASPANIN-1"/>
    <property type="match status" value="1"/>
</dbReference>
<dbReference type="Pfam" id="PF00335">
    <property type="entry name" value="Tetraspanin"/>
    <property type="match status" value="1"/>
</dbReference>
<dbReference type="PIRSF" id="PIRSF002419">
    <property type="entry name" value="Tetraspanin"/>
    <property type="match status" value="1"/>
</dbReference>
<dbReference type="PRINTS" id="PR00259">
    <property type="entry name" value="TMFOUR"/>
</dbReference>
<dbReference type="SUPFAM" id="SSF48652">
    <property type="entry name" value="Tetraspanin"/>
    <property type="match status" value="1"/>
</dbReference>
<dbReference type="PROSITE" id="PS00421">
    <property type="entry name" value="TM4_1"/>
    <property type="match status" value="1"/>
</dbReference>
<name>TSN1_BOVIN</name>
<comment type="function">
    <text evidence="2 3">Structural component of specialized membrane microdomains known as tetraspanin-enriched microdomains (TERMs), which act as platforms for receptor clustering and signaling. Participates thereby in diverse biological functions such as cell signal transduction, adhesion, migration and protein trafficking (By similarity). Regulates neuronal differentiation in response to NGF by facilitating NGF-mediated activation of NTRK1/TRKA receptor tyrosine kinase and subsequent downstream signaling pathways (By similarity). Plays a role in the inhibition of TNFalpha-induced apoptosis. Mechanistically, inhibits the NF-kappa-B signaling pathway by blocking phosphorylation of CHUK. Also promotes the stability of the thiamine transporter 1/SLC19A2 in intestinal epithelial cells leading to an increase of thiamine uptake process (By similarity).</text>
</comment>
<comment type="subunit">
    <text evidence="2 3">Interacts with SLC19A2 (By similarity). Interacts with NTRK1/TRKA (By similarity).</text>
</comment>
<comment type="subcellular location">
    <subcellularLocation>
        <location evidence="1">Lysosome membrane</location>
        <topology evidence="1">Multi-pass membrane protein</topology>
    </subcellularLocation>
</comment>
<comment type="similarity">
    <text evidence="5">Belongs to the tetraspanin (TM4SF) family.</text>
</comment>
<sequence length="241" mass="26208">MGCFNFIKVMMILFNMLIFLCGAALLAVGIWVSVDGPSFVKIFGPMSSSAMQFVNVGYFLIAAGAVLFALGFLGCYGAQTESKCALMTFFFILLLIFIAEVAAAVVALVYTTLAENFLTAVVVPNIKKEYGSQKDFTQVWNSTMAGLKCCGFTNYTDFEGSPYVRKNGTFPPYCCYDSVNNSFMEPCNNFTAHNMSVQGCFKQLLYDIRTNAVTVGGVAAGIGGLELAAMIVSMYLYCNLE</sequence>
<accession>Q3T0S3</accession>
<organism>
    <name type="scientific">Bos taurus</name>
    <name type="common">Bovine</name>
    <dbReference type="NCBI Taxonomy" id="9913"/>
    <lineage>
        <taxon>Eukaryota</taxon>
        <taxon>Metazoa</taxon>
        <taxon>Chordata</taxon>
        <taxon>Craniata</taxon>
        <taxon>Vertebrata</taxon>
        <taxon>Euteleostomi</taxon>
        <taxon>Mammalia</taxon>
        <taxon>Eutheria</taxon>
        <taxon>Laurasiatheria</taxon>
        <taxon>Artiodactyla</taxon>
        <taxon>Ruminantia</taxon>
        <taxon>Pecora</taxon>
        <taxon>Bovidae</taxon>
        <taxon>Bovinae</taxon>
        <taxon>Bos</taxon>
    </lineage>
</organism>